<protein>
    <recommendedName>
        <fullName evidence="1">RNA-binding protein Hfq</fullName>
    </recommendedName>
</protein>
<evidence type="ECO:0000255" key="1">
    <source>
        <dbReference type="HAMAP-Rule" id="MF_00436"/>
    </source>
</evidence>
<evidence type="ECO:0000255" key="2">
    <source>
        <dbReference type="PROSITE-ProRule" id="PRU01346"/>
    </source>
</evidence>
<feature type="chain" id="PRO_1000080653" description="RNA-binding protein Hfq">
    <location>
        <begin position="1"/>
        <end position="79"/>
    </location>
</feature>
<feature type="domain" description="Sm" evidence="2">
    <location>
        <begin position="10"/>
        <end position="70"/>
    </location>
</feature>
<comment type="function">
    <text evidence="1">RNA chaperone that binds small regulatory RNA (sRNAs) and mRNAs to facilitate mRNA translational regulation in response to envelope stress, environmental stress and changes in metabolite concentrations. Also binds with high specificity to tRNAs.</text>
</comment>
<comment type="subunit">
    <text evidence="1">Homohexamer.</text>
</comment>
<comment type="similarity">
    <text evidence="1">Belongs to the Hfq family.</text>
</comment>
<sequence length="79" mass="8903">MAERSQHLQDVFLNTVRKQKISLTIFLVNGVKLTGIVTSFDSFCVLLRRDGHAQLVYKHAISTIMPGQPVQMFEGESPE</sequence>
<reference key="1">
    <citation type="journal article" date="2007" name="Nat. Genet.">
        <title>Genomic analysis of Bartonella identifies type IV secretion systems as host adaptability factors.</title>
        <authorList>
            <person name="Saenz H.L."/>
            <person name="Engel P."/>
            <person name="Stoeckli M.C."/>
            <person name="Lanz C."/>
            <person name="Raddatz G."/>
            <person name="Vayssier-Taussat M."/>
            <person name="Birtles R."/>
            <person name="Schuster S.C."/>
            <person name="Dehio C."/>
        </authorList>
    </citation>
    <scope>NUCLEOTIDE SEQUENCE [LARGE SCALE GENOMIC DNA]</scope>
    <source>
        <strain>CIP 105476 / IBS 506</strain>
    </source>
</reference>
<accession>A9IVD2</accession>
<organism>
    <name type="scientific">Bartonella tribocorum (strain CIP 105476 / IBS 506)</name>
    <dbReference type="NCBI Taxonomy" id="382640"/>
    <lineage>
        <taxon>Bacteria</taxon>
        <taxon>Pseudomonadati</taxon>
        <taxon>Pseudomonadota</taxon>
        <taxon>Alphaproteobacteria</taxon>
        <taxon>Hyphomicrobiales</taxon>
        <taxon>Bartonellaceae</taxon>
        <taxon>Bartonella</taxon>
    </lineage>
</organism>
<gene>
    <name evidence="1" type="primary">hfq</name>
    <name type="ordered locus">BT_1323</name>
</gene>
<proteinExistence type="inferred from homology"/>
<keyword id="KW-0694">RNA-binding</keyword>
<keyword id="KW-0346">Stress response</keyword>
<name>HFQ_BART1</name>
<dbReference type="EMBL" id="AM260525">
    <property type="protein sequence ID" value="CAK01687.1"/>
    <property type="molecule type" value="Genomic_DNA"/>
</dbReference>
<dbReference type="RefSeq" id="WP_012231869.1">
    <property type="nucleotide sequence ID" value="NC_010161.1"/>
</dbReference>
<dbReference type="SMR" id="A9IVD2"/>
<dbReference type="KEGG" id="btr:BT_1323"/>
<dbReference type="eggNOG" id="COG1923">
    <property type="taxonomic scope" value="Bacteria"/>
</dbReference>
<dbReference type="HOGENOM" id="CLU_113688_0_0_5"/>
<dbReference type="Proteomes" id="UP000001592">
    <property type="component" value="Chromosome"/>
</dbReference>
<dbReference type="GO" id="GO:0005829">
    <property type="term" value="C:cytosol"/>
    <property type="evidence" value="ECO:0007669"/>
    <property type="project" value="TreeGrafter"/>
</dbReference>
<dbReference type="GO" id="GO:0003723">
    <property type="term" value="F:RNA binding"/>
    <property type="evidence" value="ECO:0007669"/>
    <property type="project" value="UniProtKB-UniRule"/>
</dbReference>
<dbReference type="GO" id="GO:0006355">
    <property type="term" value="P:regulation of DNA-templated transcription"/>
    <property type="evidence" value="ECO:0007669"/>
    <property type="project" value="InterPro"/>
</dbReference>
<dbReference type="GO" id="GO:0043487">
    <property type="term" value="P:regulation of RNA stability"/>
    <property type="evidence" value="ECO:0007669"/>
    <property type="project" value="TreeGrafter"/>
</dbReference>
<dbReference type="GO" id="GO:0045974">
    <property type="term" value="P:regulation of translation, ncRNA-mediated"/>
    <property type="evidence" value="ECO:0007669"/>
    <property type="project" value="TreeGrafter"/>
</dbReference>
<dbReference type="CDD" id="cd01716">
    <property type="entry name" value="Hfq"/>
    <property type="match status" value="1"/>
</dbReference>
<dbReference type="Gene3D" id="2.30.30.100">
    <property type="match status" value="1"/>
</dbReference>
<dbReference type="HAMAP" id="MF_00436">
    <property type="entry name" value="Hfq"/>
    <property type="match status" value="1"/>
</dbReference>
<dbReference type="InterPro" id="IPR005001">
    <property type="entry name" value="Hfq"/>
</dbReference>
<dbReference type="InterPro" id="IPR010920">
    <property type="entry name" value="LSM_dom_sf"/>
</dbReference>
<dbReference type="InterPro" id="IPR047575">
    <property type="entry name" value="Sm"/>
</dbReference>
<dbReference type="NCBIfam" id="TIGR02383">
    <property type="entry name" value="Hfq"/>
    <property type="match status" value="1"/>
</dbReference>
<dbReference type="NCBIfam" id="NF001602">
    <property type="entry name" value="PRK00395.1"/>
    <property type="match status" value="1"/>
</dbReference>
<dbReference type="PANTHER" id="PTHR34772">
    <property type="entry name" value="RNA-BINDING PROTEIN HFQ"/>
    <property type="match status" value="1"/>
</dbReference>
<dbReference type="PANTHER" id="PTHR34772:SF1">
    <property type="entry name" value="RNA-BINDING PROTEIN HFQ"/>
    <property type="match status" value="1"/>
</dbReference>
<dbReference type="Pfam" id="PF17209">
    <property type="entry name" value="Hfq"/>
    <property type="match status" value="1"/>
</dbReference>
<dbReference type="SUPFAM" id="SSF50182">
    <property type="entry name" value="Sm-like ribonucleoproteins"/>
    <property type="match status" value="1"/>
</dbReference>
<dbReference type="PROSITE" id="PS52002">
    <property type="entry name" value="SM"/>
    <property type="match status" value="1"/>
</dbReference>